<dbReference type="EMBL" id="CT978603">
    <property type="protein sequence ID" value="CAK28177.1"/>
    <property type="molecule type" value="Genomic_DNA"/>
</dbReference>
<dbReference type="SMR" id="A5GTG8"/>
<dbReference type="STRING" id="316278.SynRCC307_1274"/>
<dbReference type="KEGG" id="syr:SynRCC307_1274"/>
<dbReference type="eggNOG" id="COG0052">
    <property type="taxonomic scope" value="Bacteria"/>
</dbReference>
<dbReference type="HOGENOM" id="CLU_040318_1_2_3"/>
<dbReference type="OrthoDB" id="9808036at2"/>
<dbReference type="Proteomes" id="UP000001115">
    <property type="component" value="Chromosome"/>
</dbReference>
<dbReference type="GO" id="GO:0022627">
    <property type="term" value="C:cytosolic small ribosomal subunit"/>
    <property type="evidence" value="ECO:0007669"/>
    <property type="project" value="TreeGrafter"/>
</dbReference>
<dbReference type="GO" id="GO:0003735">
    <property type="term" value="F:structural constituent of ribosome"/>
    <property type="evidence" value="ECO:0007669"/>
    <property type="project" value="InterPro"/>
</dbReference>
<dbReference type="GO" id="GO:0006412">
    <property type="term" value="P:translation"/>
    <property type="evidence" value="ECO:0007669"/>
    <property type="project" value="UniProtKB-UniRule"/>
</dbReference>
<dbReference type="CDD" id="cd01425">
    <property type="entry name" value="RPS2"/>
    <property type="match status" value="1"/>
</dbReference>
<dbReference type="FunFam" id="1.10.287.610:FF:000001">
    <property type="entry name" value="30S ribosomal protein S2"/>
    <property type="match status" value="1"/>
</dbReference>
<dbReference type="Gene3D" id="3.40.50.10490">
    <property type="entry name" value="Glucose-6-phosphate isomerase like protein, domain 1"/>
    <property type="match status" value="1"/>
</dbReference>
<dbReference type="Gene3D" id="1.10.287.610">
    <property type="entry name" value="Helix hairpin bin"/>
    <property type="match status" value="1"/>
</dbReference>
<dbReference type="HAMAP" id="MF_00291_B">
    <property type="entry name" value="Ribosomal_uS2_B"/>
    <property type="match status" value="1"/>
</dbReference>
<dbReference type="InterPro" id="IPR001865">
    <property type="entry name" value="Ribosomal_uS2"/>
</dbReference>
<dbReference type="InterPro" id="IPR005706">
    <property type="entry name" value="Ribosomal_uS2_bac/mit/plastid"/>
</dbReference>
<dbReference type="InterPro" id="IPR018130">
    <property type="entry name" value="Ribosomal_uS2_CS"/>
</dbReference>
<dbReference type="InterPro" id="IPR023591">
    <property type="entry name" value="Ribosomal_uS2_flav_dom_sf"/>
</dbReference>
<dbReference type="NCBIfam" id="TIGR01011">
    <property type="entry name" value="rpsB_bact"/>
    <property type="match status" value="1"/>
</dbReference>
<dbReference type="PANTHER" id="PTHR12534">
    <property type="entry name" value="30S RIBOSOMAL PROTEIN S2 PROKARYOTIC AND ORGANELLAR"/>
    <property type="match status" value="1"/>
</dbReference>
<dbReference type="PANTHER" id="PTHR12534:SF0">
    <property type="entry name" value="SMALL RIBOSOMAL SUBUNIT PROTEIN US2M"/>
    <property type="match status" value="1"/>
</dbReference>
<dbReference type="Pfam" id="PF00318">
    <property type="entry name" value="Ribosomal_S2"/>
    <property type="match status" value="1"/>
</dbReference>
<dbReference type="PRINTS" id="PR00395">
    <property type="entry name" value="RIBOSOMALS2"/>
</dbReference>
<dbReference type="SUPFAM" id="SSF52313">
    <property type="entry name" value="Ribosomal protein S2"/>
    <property type="match status" value="1"/>
</dbReference>
<dbReference type="PROSITE" id="PS00962">
    <property type="entry name" value="RIBOSOMAL_S2_1"/>
    <property type="match status" value="1"/>
</dbReference>
<evidence type="ECO:0000255" key="1">
    <source>
        <dbReference type="HAMAP-Rule" id="MF_00291"/>
    </source>
</evidence>
<evidence type="ECO:0000305" key="2"/>
<protein>
    <recommendedName>
        <fullName evidence="1">Small ribosomal subunit protein uS2</fullName>
    </recommendedName>
    <alternativeName>
        <fullName evidence="2">30S ribosomal protein S2</fullName>
    </alternativeName>
</protein>
<comment type="similarity">
    <text evidence="1">Belongs to the universal ribosomal protein uS2 family.</text>
</comment>
<organism>
    <name type="scientific">Synechococcus sp. (strain RCC307)</name>
    <dbReference type="NCBI Taxonomy" id="316278"/>
    <lineage>
        <taxon>Bacteria</taxon>
        <taxon>Bacillati</taxon>
        <taxon>Cyanobacteriota</taxon>
        <taxon>Cyanophyceae</taxon>
        <taxon>Synechococcales</taxon>
        <taxon>Synechococcaceae</taxon>
        <taxon>Synechococcus</taxon>
    </lineage>
</organism>
<feature type="chain" id="PRO_1000004104" description="Small ribosomal subunit protein uS2">
    <location>
        <begin position="1"/>
        <end position="235"/>
    </location>
</feature>
<name>RS2_SYNR3</name>
<proteinExistence type="inferred from homology"/>
<gene>
    <name evidence="1" type="primary">rpsB</name>
    <name evidence="1" type="synonym">rps2</name>
    <name type="ordered locus">SynRCC307_1274</name>
</gene>
<keyword id="KW-1185">Reference proteome</keyword>
<keyword id="KW-0687">Ribonucleoprotein</keyword>
<keyword id="KW-0689">Ribosomal protein</keyword>
<reference key="1">
    <citation type="submission" date="2006-05" db="EMBL/GenBank/DDBJ databases">
        <authorList>
            <consortium name="Genoscope"/>
        </authorList>
    </citation>
    <scope>NUCLEOTIDE SEQUENCE [LARGE SCALE GENOMIC DNA]</scope>
    <source>
        <strain>RCC307</strain>
    </source>
</reference>
<sequence>MAVVTLSEMMEAGAHFGHQTRRWNPKMQRYIHCARNGVHIIDLVQTAVCMNNAYKWVRSAARSGKRFLFVGTKKQAAEVVALEASRCGASYVNQRWLGGMLTNWSTMRARIERLKDLERMESSGAIAMRPKKEASVLRRELDRLQKYLGGLKNMRRLPDVVVLIDQKREYNAVLECQKLDIPVVSMLDTNCDPDLCDVPIPCNDDAVRSVQLIIGRLADAINEGRHGSNDQGDEG</sequence>
<accession>A5GTG8</accession>